<proteinExistence type="inferred from homology"/>
<accession>B1JT91</accession>
<organism>
    <name type="scientific">Burkholderia orbicola (strain MC0-3)</name>
    <dbReference type="NCBI Taxonomy" id="406425"/>
    <lineage>
        <taxon>Bacteria</taxon>
        <taxon>Pseudomonadati</taxon>
        <taxon>Pseudomonadota</taxon>
        <taxon>Betaproteobacteria</taxon>
        <taxon>Burkholderiales</taxon>
        <taxon>Burkholderiaceae</taxon>
        <taxon>Burkholderia</taxon>
        <taxon>Burkholderia cepacia complex</taxon>
        <taxon>Burkholderia orbicola</taxon>
    </lineage>
</organism>
<gene>
    <name evidence="1" type="primary">hisS</name>
    <name type="ordered locus">Bcenmc03_1835</name>
</gene>
<keyword id="KW-0030">Aminoacyl-tRNA synthetase</keyword>
<keyword id="KW-0067">ATP-binding</keyword>
<keyword id="KW-0963">Cytoplasm</keyword>
<keyword id="KW-0436">Ligase</keyword>
<keyword id="KW-0547">Nucleotide-binding</keyword>
<keyword id="KW-0648">Protein biosynthesis</keyword>
<name>SYH_BURO0</name>
<dbReference type="EC" id="6.1.1.21" evidence="1"/>
<dbReference type="EMBL" id="CP000958">
    <property type="protein sequence ID" value="ACA90996.1"/>
    <property type="molecule type" value="Genomic_DNA"/>
</dbReference>
<dbReference type="RefSeq" id="WP_006483311.1">
    <property type="nucleotide sequence ID" value="NC_010508.1"/>
</dbReference>
<dbReference type="SMR" id="B1JT91"/>
<dbReference type="GeneID" id="83048608"/>
<dbReference type="KEGG" id="bcm:Bcenmc03_1835"/>
<dbReference type="HOGENOM" id="CLU_025113_1_1_4"/>
<dbReference type="Proteomes" id="UP000002169">
    <property type="component" value="Chromosome 1"/>
</dbReference>
<dbReference type="GO" id="GO:0005737">
    <property type="term" value="C:cytoplasm"/>
    <property type="evidence" value="ECO:0007669"/>
    <property type="project" value="UniProtKB-SubCell"/>
</dbReference>
<dbReference type="GO" id="GO:0005524">
    <property type="term" value="F:ATP binding"/>
    <property type="evidence" value="ECO:0007669"/>
    <property type="project" value="UniProtKB-UniRule"/>
</dbReference>
<dbReference type="GO" id="GO:0004821">
    <property type="term" value="F:histidine-tRNA ligase activity"/>
    <property type="evidence" value="ECO:0007669"/>
    <property type="project" value="UniProtKB-UniRule"/>
</dbReference>
<dbReference type="GO" id="GO:0006427">
    <property type="term" value="P:histidyl-tRNA aminoacylation"/>
    <property type="evidence" value="ECO:0007669"/>
    <property type="project" value="UniProtKB-UniRule"/>
</dbReference>
<dbReference type="CDD" id="cd00773">
    <property type="entry name" value="HisRS-like_core"/>
    <property type="match status" value="1"/>
</dbReference>
<dbReference type="CDD" id="cd00859">
    <property type="entry name" value="HisRS_anticodon"/>
    <property type="match status" value="1"/>
</dbReference>
<dbReference type="FunFam" id="3.30.930.10:FF:000005">
    <property type="entry name" value="Histidine--tRNA ligase"/>
    <property type="match status" value="1"/>
</dbReference>
<dbReference type="Gene3D" id="3.40.50.800">
    <property type="entry name" value="Anticodon-binding domain"/>
    <property type="match status" value="1"/>
</dbReference>
<dbReference type="Gene3D" id="3.30.930.10">
    <property type="entry name" value="Bira Bifunctional Protein, Domain 2"/>
    <property type="match status" value="1"/>
</dbReference>
<dbReference type="HAMAP" id="MF_00127">
    <property type="entry name" value="His_tRNA_synth"/>
    <property type="match status" value="1"/>
</dbReference>
<dbReference type="InterPro" id="IPR006195">
    <property type="entry name" value="aa-tRNA-synth_II"/>
</dbReference>
<dbReference type="InterPro" id="IPR045864">
    <property type="entry name" value="aa-tRNA-synth_II/BPL/LPL"/>
</dbReference>
<dbReference type="InterPro" id="IPR004154">
    <property type="entry name" value="Anticodon-bd"/>
</dbReference>
<dbReference type="InterPro" id="IPR036621">
    <property type="entry name" value="Anticodon-bd_dom_sf"/>
</dbReference>
<dbReference type="InterPro" id="IPR015807">
    <property type="entry name" value="His-tRNA-ligase"/>
</dbReference>
<dbReference type="InterPro" id="IPR041715">
    <property type="entry name" value="HisRS-like_core"/>
</dbReference>
<dbReference type="InterPro" id="IPR004516">
    <property type="entry name" value="HisRS/HisZ"/>
</dbReference>
<dbReference type="InterPro" id="IPR033656">
    <property type="entry name" value="HisRS_anticodon"/>
</dbReference>
<dbReference type="NCBIfam" id="TIGR00442">
    <property type="entry name" value="hisS"/>
    <property type="match status" value="1"/>
</dbReference>
<dbReference type="PANTHER" id="PTHR43707:SF1">
    <property type="entry name" value="HISTIDINE--TRNA LIGASE, MITOCHONDRIAL-RELATED"/>
    <property type="match status" value="1"/>
</dbReference>
<dbReference type="PANTHER" id="PTHR43707">
    <property type="entry name" value="HISTIDYL-TRNA SYNTHETASE"/>
    <property type="match status" value="1"/>
</dbReference>
<dbReference type="Pfam" id="PF03129">
    <property type="entry name" value="HGTP_anticodon"/>
    <property type="match status" value="1"/>
</dbReference>
<dbReference type="Pfam" id="PF13393">
    <property type="entry name" value="tRNA-synt_His"/>
    <property type="match status" value="1"/>
</dbReference>
<dbReference type="PIRSF" id="PIRSF001549">
    <property type="entry name" value="His-tRNA_synth"/>
    <property type="match status" value="1"/>
</dbReference>
<dbReference type="SUPFAM" id="SSF52954">
    <property type="entry name" value="Class II aaRS ABD-related"/>
    <property type="match status" value="1"/>
</dbReference>
<dbReference type="SUPFAM" id="SSF55681">
    <property type="entry name" value="Class II aaRS and biotin synthetases"/>
    <property type="match status" value="1"/>
</dbReference>
<dbReference type="PROSITE" id="PS50862">
    <property type="entry name" value="AA_TRNA_LIGASE_II"/>
    <property type="match status" value="1"/>
</dbReference>
<comment type="catalytic activity">
    <reaction evidence="1">
        <text>tRNA(His) + L-histidine + ATP = L-histidyl-tRNA(His) + AMP + diphosphate + H(+)</text>
        <dbReference type="Rhea" id="RHEA:17313"/>
        <dbReference type="Rhea" id="RHEA-COMP:9665"/>
        <dbReference type="Rhea" id="RHEA-COMP:9689"/>
        <dbReference type="ChEBI" id="CHEBI:15378"/>
        <dbReference type="ChEBI" id="CHEBI:30616"/>
        <dbReference type="ChEBI" id="CHEBI:33019"/>
        <dbReference type="ChEBI" id="CHEBI:57595"/>
        <dbReference type="ChEBI" id="CHEBI:78442"/>
        <dbReference type="ChEBI" id="CHEBI:78527"/>
        <dbReference type="ChEBI" id="CHEBI:456215"/>
        <dbReference type="EC" id="6.1.1.21"/>
    </reaction>
</comment>
<comment type="subunit">
    <text evidence="1">Homodimer.</text>
</comment>
<comment type="subcellular location">
    <subcellularLocation>
        <location evidence="1">Cytoplasm</location>
    </subcellularLocation>
</comment>
<comment type="similarity">
    <text evidence="1">Belongs to the class-II aminoacyl-tRNA synthetase family.</text>
</comment>
<feature type="chain" id="PRO_1000095531" description="Histidine--tRNA ligase">
    <location>
        <begin position="1"/>
        <end position="446"/>
    </location>
</feature>
<sequence length="446" mass="49599">MTEQKRKIEKLTGVKGMNDILPQDAGLWEFFEATVKSLLRAYGYQNIRTPIVEHTQLFTRGIGEVTDIVEKEMYSFTDALNGENLTMRPENTAAVVRASIEHNMLYDGPKRLWYIGPMFRHERPQRGRYRQFHQVGVEALGFAGPDADAEIIMMCQRLWDDLGLTGIKLEINSLGLAEERAAHRVELIKYLEQFADVLDEDAKRRLYTNPLRVLDTKNPALQDIAQNAPKLIDFLGDESRAHFEGLQRLLLANNIPFKINPRLVRGLDYYNLTVFEWVTDKLGAQGTVAAGGRYDPLIEQLGGKPTAACGWAMGIERILELLKEEDLAPEQEGVDVYVVHQGETAREQAFIAAERLRDTGLDVIFHCSADGAPASFKSQMKRADASGAAFAVIFGEEEVANGTVGVKALRGAGAEGEKNVQQTVPVESLTEFLINAMVASAEDGDD</sequence>
<reference key="1">
    <citation type="submission" date="2008-02" db="EMBL/GenBank/DDBJ databases">
        <title>Complete sequence of chromosome 1 of Burkholderia cenocepacia MC0-3.</title>
        <authorList>
            <person name="Copeland A."/>
            <person name="Lucas S."/>
            <person name="Lapidus A."/>
            <person name="Barry K."/>
            <person name="Bruce D."/>
            <person name="Goodwin L."/>
            <person name="Glavina del Rio T."/>
            <person name="Dalin E."/>
            <person name="Tice H."/>
            <person name="Pitluck S."/>
            <person name="Chain P."/>
            <person name="Malfatti S."/>
            <person name="Shin M."/>
            <person name="Vergez L."/>
            <person name="Schmutz J."/>
            <person name="Larimer F."/>
            <person name="Land M."/>
            <person name="Hauser L."/>
            <person name="Kyrpides N."/>
            <person name="Mikhailova N."/>
            <person name="Tiedje J."/>
            <person name="Richardson P."/>
        </authorList>
    </citation>
    <scope>NUCLEOTIDE SEQUENCE [LARGE SCALE GENOMIC DNA]</scope>
    <source>
        <strain>MC0-3</strain>
    </source>
</reference>
<evidence type="ECO:0000255" key="1">
    <source>
        <dbReference type="HAMAP-Rule" id="MF_00127"/>
    </source>
</evidence>
<protein>
    <recommendedName>
        <fullName evidence="1">Histidine--tRNA ligase</fullName>
        <ecNumber evidence="1">6.1.1.21</ecNumber>
    </recommendedName>
    <alternativeName>
        <fullName evidence="1">Histidyl-tRNA synthetase</fullName>
        <shortName evidence="1">HisRS</shortName>
    </alternativeName>
</protein>